<dbReference type="EC" id="7.2.1.1" evidence="1"/>
<dbReference type="EMBL" id="BA000037">
    <property type="protein sequence ID" value="BAC95351.1"/>
    <property type="molecule type" value="Genomic_DNA"/>
</dbReference>
<dbReference type="RefSeq" id="WP_011150983.1">
    <property type="nucleotide sequence ID" value="NC_005139.1"/>
</dbReference>
<dbReference type="SMR" id="Q7MID0"/>
<dbReference type="STRING" id="672.VV93_v1c23050"/>
<dbReference type="KEGG" id="vvy:VV2587"/>
<dbReference type="eggNOG" id="COG1347">
    <property type="taxonomic scope" value="Bacteria"/>
</dbReference>
<dbReference type="HOGENOM" id="CLU_046659_1_1_6"/>
<dbReference type="Proteomes" id="UP000002675">
    <property type="component" value="Chromosome I"/>
</dbReference>
<dbReference type="GO" id="GO:0005886">
    <property type="term" value="C:plasma membrane"/>
    <property type="evidence" value="ECO:0007669"/>
    <property type="project" value="UniProtKB-SubCell"/>
</dbReference>
<dbReference type="GO" id="GO:0016655">
    <property type="term" value="F:oxidoreductase activity, acting on NAD(P)H, quinone or similar compound as acceptor"/>
    <property type="evidence" value="ECO:0007669"/>
    <property type="project" value="UniProtKB-UniRule"/>
</dbReference>
<dbReference type="GO" id="GO:0006814">
    <property type="term" value="P:sodium ion transport"/>
    <property type="evidence" value="ECO:0007669"/>
    <property type="project" value="UniProtKB-UniRule"/>
</dbReference>
<dbReference type="HAMAP" id="MF_00428">
    <property type="entry name" value="NqrD"/>
    <property type="match status" value="1"/>
</dbReference>
<dbReference type="InterPro" id="IPR011292">
    <property type="entry name" value="NqrD"/>
</dbReference>
<dbReference type="InterPro" id="IPR003667">
    <property type="entry name" value="NqrDE/RnfAE"/>
</dbReference>
<dbReference type="NCBIfam" id="TIGR01939">
    <property type="entry name" value="nqrD"/>
    <property type="match status" value="1"/>
</dbReference>
<dbReference type="NCBIfam" id="NF006777">
    <property type="entry name" value="PRK09292.1"/>
    <property type="match status" value="1"/>
</dbReference>
<dbReference type="NCBIfam" id="NF009070">
    <property type="entry name" value="PRK12405.1"/>
    <property type="match status" value="1"/>
</dbReference>
<dbReference type="PANTHER" id="PTHR30586">
    <property type="entry name" value="ELECTRON TRANSPORT COMPLEX PROTEIN RNFE"/>
    <property type="match status" value="1"/>
</dbReference>
<dbReference type="PANTHER" id="PTHR30586:SF1">
    <property type="entry name" value="NA(+)-TRANSLOCATING NADH-QUINONE REDUCTASE SUBUNIT D"/>
    <property type="match status" value="1"/>
</dbReference>
<dbReference type="Pfam" id="PF02508">
    <property type="entry name" value="Rnf-Nqr"/>
    <property type="match status" value="1"/>
</dbReference>
<dbReference type="PIRSF" id="PIRSF006102">
    <property type="entry name" value="NQR_DE"/>
    <property type="match status" value="1"/>
</dbReference>
<proteinExistence type="inferred from homology"/>
<name>NQRD_VIBVY</name>
<feature type="chain" id="PRO_0000214245" description="Na(+)-translocating NADH-quinone reductase subunit D">
    <location>
        <begin position="1"/>
        <end position="210"/>
    </location>
</feature>
<feature type="transmembrane region" description="Helical" evidence="1">
    <location>
        <begin position="42"/>
        <end position="62"/>
    </location>
</feature>
<feature type="transmembrane region" description="Helical" evidence="1">
    <location>
        <begin position="72"/>
        <end position="92"/>
    </location>
</feature>
<feature type="transmembrane region" description="Helical" evidence="1">
    <location>
        <begin position="103"/>
        <end position="123"/>
    </location>
</feature>
<feature type="transmembrane region" description="Helical" evidence="1">
    <location>
        <begin position="131"/>
        <end position="151"/>
    </location>
</feature>
<feature type="transmembrane region" description="Helical" evidence="1">
    <location>
        <begin position="178"/>
        <end position="198"/>
    </location>
</feature>
<reference key="1">
    <citation type="journal article" date="2003" name="Genome Res.">
        <title>Comparative genome analysis of Vibrio vulnificus, a marine pathogen.</title>
        <authorList>
            <person name="Chen C.-Y."/>
            <person name="Wu K.-M."/>
            <person name="Chang Y.-C."/>
            <person name="Chang C.-H."/>
            <person name="Tsai H.-C."/>
            <person name="Liao T.-L."/>
            <person name="Liu Y.-M."/>
            <person name="Chen H.-J."/>
            <person name="Shen A.B.-T."/>
            <person name="Li J.-C."/>
            <person name="Su T.-L."/>
            <person name="Shao C.-P."/>
            <person name="Lee C.-T."/>
            <person name="Hor L.-I."/>
            <person name="Tsai S.-F."/>
        </authorList>
    </citation>
    <scope>NUCLEOTIDE SEQUENCE [LARGE SCALE GENOMIC DNA]</scope>
    <source>
        <strain>YJ016</strain>
    </source>
</reference>
<evidence type="ECO:0000255" key="1">
    <source>
        <dbReference type="HAMAP-Rule" id="MF_00428"/>
    </source>
</evidence>
<protein>
    <recommendedName>
        <fullName evidence="1">Na(+)-translocating NADH-quinone reductase subunit D</fullName>
        <shortName evidence="1">Na(+)-NQR subunit D</shortName>
        <shortName evidence="1">Na(+)-translocating NQR subunit D</shortName>
        <ecNumber evidence="1">7.2.1.1</ecNumber>
    </recommendedName>
    <alternativeName>
        <fullName evidence="1">NQR complex subunit D</fullName>
    </alternativeName>
    <alternativeName>
        <fullName evidence="1">NQR-1 subunit D</fullName>
    </alternativeName>
</protein>
<accession>Q7MID0</accession>
<organism>
    <name type="scientific">Vibrio vulnificus (strain YJ016)</name>
    <dbReference type="NCBI Taxonomy" id="196600"/>
    <lineage>
        <taxon>Bacteria</taxon>
        <taxon>Pseudomonadati</taxon>
        <taxon>Pseudomonadota</taxon>
        <taxon>Gammaproteobacteria</taxon>
        <taxon>Vibrionales</taxon>
        <taxon>Vibrionaceae</taxon>
        <taxon>Vibrio</taxon>
    </lineage>
</organism>
<sequence length="210" mass="22733">MSSAQNIKKSILAPVLDNNPIALQVLGVCSALAVTTKLETAFVMTLAVTFVTALSNFFVSVIRNHIPNSVRIIVQMAIIASLVIVVDQILKAYLYDISKQLSVFVGLIITNCIVMGRAEAFAMKSAPVPSLIDGIGNGLGYGFVLITVGFFRELFGSGKLFGMEVLPLVNNGGWYQPNGLMLLAPSAFFLIGFMIWAIRTFKPEQVEAKE</sequence>
<comment type="function">
    <text evidence="1">NQR complex catalyzes the reduction of ubiquinone-1 to ubiquinol by two successive reactions, coupled with the transport of Na(+) ions from the cytoplasm to the periplasm. NqrA to NqrE are probably involved in the second step, the conversion of ubisemiquinone to ubiquinol.</text>
</comment>
<comment type="catalytic activity">
    <reaction evidence="1">
        <text>a ubiquinone + n Na(+)(in) + NADH + H(+) = a ubiquinol + n Na(+)(out) + NAD(+)</text>
        <dbReference type="Rhea" id="RHEA:47748"/>
        <dbReference type="Rhea" id="RHEA-COMP:9565"/>
        <dbReference type="Rhea" id="RHEA-COMP:9566"/>
        <dbReference type="ChEBI" id="CHEBI:15378"/>
        <dbReference type="ChEBI" id="CHEBI:16389"/>
        <dbReference type="ChEBI" id="CHEBI:17976"/>
        <dbReference type="ChEBI" id="CHEBI:29101"/>
        <dbReference type="ChEBI" id="CHEBI:57540"/>
        <dbReference type="ChEBI" id="CHEBI:57945"/>
        <dbReference type="EC" id="7.2.1.1"/>
    </reaction>
</comment>
<comment type="subunit">
    <text evidence="1">Composed of six subunits; NqrA, NqrB, NqrC, NqrD, NqrE and NqrF.</text>
</comment>
<comment type="subcellular location">
    <subcellularLocation>
        <location evidence="1">Cell inner membrane</location>
        <topology evidence="1">Multi-pass membrane protein</topology>
    </subcellularLocation>
</comment>
<comment type="similarity">
    <text evidence="1">Belongs to the NqrDE/RnfAE family.</text>
</comment>
<gene>
    <name evidence="1" type="primary">nqrD</name>
    <name type="ordered locus">VV2587</name>
</gene>
<keyword id="KW-0997">Cell inner membrane</keyword>
<keyword id="KW-1003">Cell membrane</keyword>
<keyword id="KW-0406">Ion transport</keyword>
<keyword id="KW-0472">Membrane</keyword>
<keyword id="KW-0520">NAD</keyword>
<keyword id="KW-0915">Sodium</keyword>
<keyword id="KW-0739">Sodium transport</keyword>
<keyword id="KW-1278">Translocase</keyword>
<keyword id="KW-0812">Transmembrane</keyword>
<keyword id="KW-1133">Transmembrane helix</keyword>
<keyword id="KW-0813">Transport</keyword>
<keyword id="KW-0830">Ubiquinone</keyword>